<comment type="function">
    <text evidence="1">Confers DNA tethering and processivity to DNA polymerases and other proteins. Acts as a clamp, forming a ring around DNA (a reaction catalyzed by the clamp-loading complex) which diffuses in an ATP-independent manner freely and bidirectionally along dsDNA. Initially characterized for its ability to contact the catalytic subunit of DNA polymerase III (Pol III), a complex, multichain enzyme responsible for most of the replicative synthesis in bacteria; Pol III exhibits 3'-5' exonuclease proofreading activity. The beta chain is required for initiation of replication as well as for processivity of DNA replication.</text>
</comment>
<comment type="subunit">
    <text evidence="1">Forms a ring-shaped head-to-tail homodimer around DNA which binds and tethers DNA polymerases and other proteins to the DNA. The DNA replisome complex has a single clamp-loading complex (3 tau and 1 each of delta, delta', psi and chi subunits) which binds 3 Pol III cores (1 core on the leading strand and 2 on the lagging strand) each with a beta sliding clamp dimer. Additional proteins in the replisome are other copies of gamma, psi and chi, Ssb, DNA helicase and RNA primase.</text>
</comment>
<comment type="subcellular location">
    <subcellularLocation>
        <location evidence="1">Cytoplasm</location>
    </subcellularLocation>
</comment>
<comment type="similarity">
    <text evidence="2">Belongs to the beta sliding clamp family.</text>
</comment>
<accession>Q5HJZ4</accession>
<dbReference type="EMBL" id="CP000046">
    <property type="protein sequence ID" value="AAW37390.1"/>
    <property type="molecule type" value="Genomic_DNA"/>
</dbReference>
<dbReference type="RefSeq" id="WP_000969811.1">
    <property type="nucleotide sequence ID" value="NZ_JBGOFO010000001.1"/>
</dbReference>
<dbReference type="SMR" id="Q5HJZ4"/>
<dbReference type="KEGG" id="sac:SACOL0002"/>
<dbReference type="HOGENOM" id="CLU_038149_2_0_9"/>
<dbReference type="Proteomes" id="UP000000530">
    <property type="component" value="Chromosome"/>
</dbReference>
<dbReference type="GO" id="GO:0005737">
    <property type="term" value="C:cytoplasm"/>
    <property type="evidence" value="ECO:0007669"/>
    <property type="project" value="UniProtKB-SubCell"/>
</dbReference>
<dbReference type="GO" id="GO:0009360">
    <property type="term" value="C:DNA polymerase III complex"/>
    <property type="evidence" value="ECO:0007669"/>
    <property type="project" value="InterPro"/>
</dbReference>
<dbReference type="GO" id="GO:0008408">
    <property type="term" value="F:3'-5' exonuclease activity"/>
    <property type="evidence" value="ECO:0007669"/>
    <property type="project" value="InterPro"/>
</dbReference>
<dbReference type="GO" id="GO:0003677">
    <property type="term" value="F:DNA binding"/>
    <property type="evidence" value="ECO:0007669"/>
    <property type="project" value="UniProtKB-KW"/>
</dbReference>
<dbReference type="GO" id="GO:0003887">
    <property type="term" value="F:DNA-directed DNA polymerase activity"/>
    <property type="evidence" value="ECO:0007669"/>
    <property type="project" value="UniProtKB-KW"/>
</dbReference>
<dbReference type="GO" id="GO:0006271">
    <property type="term" value="P:DNA strand elongation involved in DNA replication"/>
    <property type="evidence" value="ECO:0007669"/>
    <property type="project" value="TreeGrafter"/>
</dbReference>
<dbReference type="CDD" id="cd00140">
    <property type="entry name" value="beta_clamp"/>
    <property type="match status" value="1"/>
</dbReference>
<dbReference type="FunFam" id="3.10.150.10:FF:000007">
    <property type="entry name" value="Beta sliding clamp"/>
    <property type="match status" value="1"/>
</dbReference>
<dbReference type="Gene3D" id="3.70.10.10">
    <property type="match status" value="1"/>
</dbReference>
<dbReference type="Gene3D" id="3.10.150.10">
    <property type="entry name" value="DNA Polymerase III, subunit A, domain 2"/>
    <property type="match status" value="1"/>
</dbReference>
<dbReference type="InterPro" id="IPR046938">
    <property type="entry name" value="DNA_clamp_sf"/>
</dbReference>
<dbReference type="InterPro" id="IPR001001">
    <property type="entry name" value="DNA_polIII_beta"/>
</dbReference>
<dbReference type="InterPro" id="IPR022635">
    <property type="entry name" value="DNA_polIII_beta_C"/>
</dbReference>
<dbReference type="InterPro" id="IPR022637">
    <property type="entry name" value="DNA_polIII_beta_cen"/>
</dbReference>
<dbReference type="InterPro" id="IPR022634">
    <property type="entry name" value="DNA_polIII_beta_N"/>
</dbReference>
<dbReference type="NCBIfam" id="TIGR00663">
    <property type="entry name" value="dnan"/>
    <property type="match status" value="1"/>
</dbReference>
<dbReference type="PANTHER" id="PTHR30478:SF0">
    <property type="entry name" value="BETA SLIDING CLAMP"/>
    <property type="match status" value="1"/>
</dbReference>
<dbReference type="PANTHER" id="PTHR30478">
    <property type="entry name" value="DNA POLYMERASE III SUBUNIT BETA"/>
    <property type="match status" value="1"/>
</dbReference>
<dbReference type="Pfam" id="PF00712">
    <property type="entry name" value="DNA_pol3_beta"/>
    <property type="match status" value="1"/>
</dbReference>
<dbReference type="Pfam" id="PF02767">
    <property type="entry name" value="DNA_pol3_beta_2"/>
    <property type="match status" value="1"/>
</dbReference>
<dbReference type="Pfam" id="PF02768">
    <property type="entry name" value="DNA_pol3_beta_3"/>
    <property type="match status" value="1"/>
</dbReference>
<dbReference type="PIRSF" id="PIRSF000804">
    <property type="entry name" value="DNA_pol_III_b"/>
    <property type="match status" value="1"/>
</dbReference>
<dbReference type="SMART" id="SM00480">
    <property type="entry name" value="POL3Bc"/>
    <property type="match status" value="1"/>
</dbReference>
<dbReference type="SUPFAM" id="SSF55979">
    <property type="entry name" value="DNA clamp"/>
    <property type="match status" value="3"/>
</dbReference>
<protein>
    <recommendedName>
        <fullName>Beta sliding clamp</fullName>
        <shortName>Beta clamp</shortName>
        <shortName>Sliding clamp</shortName>
    </recommendedName>
    <alternativeName>
        <fullName>Beta-clamp processivity factor</fullName>
    </alternativeName>
    <alternativeName>
        <fullName>DNA polymerase III beta sliding clamp subunit</fullName>
    </alternativeName>
    <alternativeName>
        <fullName>DNA polymerase III subunit beta</fullName>
    </alternativeName>
</protein>
<sequence length="377" mass="41914">MMEFTIKRDYFITQLNDTLKAISPRTTLPILTGIKIDAKEHEVILTGSDSEISIEITIPKTVDGEDIVNISETGSVVLPGRFFVDIIKKLPGKDVKLSTNEQFQTLITSGHSEFNLSGLDPDQYPLLPQVSRDDAIQLSVKVLKNVIAQTNFAVSTSETRPVLTGVNWLIQENELICTATDSHRLAVRKLQLEDVSENKNVIIPGKALAELNKIMSDNEEDIDIFFASNQVLFKVGNVNFISRLLEGHYPDTTRLFPENYEIKLSIDNGEFYHAIDRASLLAREGGNNVIKLSTGDDVVELSSTSPEIGTVKEEVDANDVEGGSLKISFNSKYMMDALKAIDNDEVEVEFFGTMKPFILKPKGDDSVTQLILPIRTY</sequence>
<gene>
    <name type="primary">dnaN</name>
    <name type="ordered locus">SACOL0002</name>
</gene>
<name>DPO3B_STAAC</name>
<organism>
    <name type="scientific">Staphylococcus aureus (strain COL)</name>
    <dbReference type="NCBI Taxonomy" id="93062"/>
    <lineage>
        <taxon>Bacteria</taxon>
        <taxon>Bacillati</taxon>
        <taxon>Bacillota</taxon>
        <taxon>Bacilli</taxon>
        <taxon>Bacillales</taxon>
        <taxon>Staphylococcaceae</taxon>
        <taxon>Staphylococcus</taxon>
    </lineage>
</organism>
<keyword id="KW-0963">Cytoplasm</keyword>
<keyword id="KW-0235">DNA replication</keyword>
<keyword id="KW-0238">DNA-binding</keyword>
<keyword id="KW-0239">DNA-directed DNA polymerase</keyword>
<keyword id="KW-0548">Nucleotidyltransferase</keyword>
<keyword id="KW-0808">Transferase</keyword>
<reference key="1">
    <citation type="journal article" date="2005" name="J. Bacteriol.">
        <title>Insights on evolution of virulence and resistance from the complete genome analysis of an early methicillin-resistant Staphylococcus aureus strain and a biofilm-producing methicillin-resistant Staphylococcus epidermidis strain.</title>
        <authorList>
            <person name="Gill S.R."/>
            <person name="Fouts D.E."/>
            <person name="Archer G.L."/>
            <person name="Mongodin E.F."/>
            <person name="DeBoy R.T."/>
            <person name="Ravel J."/>
            <person name="Paulsen I.T."/>
            <person name="Kolonay J.F."/>
            <person name="Brinkac L.M."/>
            <person name="Beanan M.J."/>
            <person name="Dodson R.J."/>
            <person name="Daugherty S.C."/>
            <person name="Madupu R."/>
            <person name="Angiuoli S.V."/>
            <person name="Durkin A.S."/>
            <person name="Haft D.H."/>
            <person name="Vamathevan J.J."/>
            <person name="Khouri H."/>
            <person name="Utterback T.R."/>
            <person name="Lee C."/>
            <person name="Dimitrov G."/>
            <person name="Jiang L."/>
            <person name="Qin H."/>
            <person name="Weidman J."/>
            <person name="Tran K."/>
            <person name="Kang K.H."/>
            <person name="Hance I.R."/>
            <person name="Nelson K.E."/>
            <person name="Fraser C.M."/>
        </authorList>
    </citation>
    <scope>NUCLEOTIDE SEQUENCE [LARGE SCALE GENOMIC DNA]</scope>
    <source>
        <strain>COL</strain>
    </source>
</reference>
<evidence type="ECO:0000250" key="1">
    <source>
        <dbReference type="UniProtKB" id="P0A988"/>
    </source>
</evidence>
<evidence type="ECO:0000305" key="2"/>
<feature type="chain" id="PRO_0000105462" description="Beta sliding clamp">
    <location>
        <begin position="1"/>
        <end position="377"/>
    </location>
</feature>
<proteinExistence type="inferred from homology"/>